<dbReference type="EC" id="5.3.1.16" evidence="1"/>
<dbReference type="EMBL" id="CP000570">
    <property type="protein sequence ID" value="ABN84380.1"/>
    <property type="molecule type" value="Genomic_DNA"/>
</dbReference>
<dbReference type="RefSeq" id="WP_004199906.1">
    <property type="nucleotide sequence ID" value="NC_009074.1"/>
</dbReference>
<dbReference type="SMR" id="A3NE94"/>
<dbReference type="GeneID" id="93061751"/>
<dbReference type="KEGG" id="bpd:BURPS668_3661"/>
<dbReference type="HOGENOM" id="CLU_048577_1_1_4"/>
<dbReference type="UniPathway" id="UPA00031">
    <property type="reaction ID" value="UER00009"/>
</dbReference>
<dbReference type="GO" id="GO:0005737">
    <property type="term" value="C:cytoplasm"/>
    <property type="evidence" value="ECO:0007669"/>
    <property type="project" value="UniProtKB-SubCell"/>
</dbReference>
<dbReference type="GO" id="GO:0003949">
    <property type="term" value="F:1-(5-phosphoribosyl)-5-[(5-phosphoribosylamino)methylideneamino]imidazole-4-carboxamide isomerase activity"/>
    <property type="evidence" value="ECO:0007669"/>
    <property type="project" value="UniProtKB-UniRule"/>
</dbReference>
<dbReference type="GO" id="GO:0000105">
    <property type="term" value="P:L-histidine biosynthetic process"/>
    <property type="evidence" value="ECO:0007669"/>
    <property type="project" value="UniProtKB-UniRule"/>
</dbReference>
<dbReference type="GO" id="GO:0000162">
    <property type="term" value="P:L-tryptophan biosynthetic process"/>
    <property type="evidence" value="ECO:0007669"/>
    <property type="project" value="TreeGrafter"/>
</dbReference>
<dbReference type="CDD" id="cd04732">
    <property type="entry name" value="HisA"/>
    <property type="match status" value="1"/>
</dbReference>
<dbReference type="FunFam" id="3.20.20.70:FF:000009">
    <property type="entry name" value="1-(5-phosphoribosyl)-5-[(5-phosphoribosylamino)methylideneamino] imidazole-4-carboxamide isomerase"/>
    <property type="match status" value="1"/>
</dbReference>
<dbReference type="Gene3D" id="3.20.20.70">
    <property type="entry name" value="Aldolase class I"/>
    <property type="match status" value="1"/>
</dbReference>
<dbReference type="HAMAP" id="MF_01014">
    <property type="entry name" value="HisA"/>
    <property type="match status" value="1"/>
</dbReference>
<dbReference type="InterPro" id="IPR013785">
    <property type="entry name" value="Aldolase_TIM"/>
</dbReference>
<dbReference type="InterPro" id="IPR006062">
    <property type="entry name" value="His_biosynth"/>
</dbReference>
<dbReference type="InterPro" id="IPR006063">
    <property type="entry name" value="HisA_bact_arch"/>
</dbReference>
<dbReference type="InterPro" id="IPR044524">
    <property type="entry name" value="Isoase_HisA-like"/>
</dbReference>
<dbReference type="InterPro" id="IPR023016">
    <property type="entry name" value="Isoase_HisA-like_bact"/>
</dbReference>
<dbReference type="InterPro" id="IPR011060">
    <property type="entry name" value="RibuloseP-bd_barrel"/>
</dbReference>
<dbReference type="NCBIfam" id="TIGR00007">
    <property type="entry name" value="1-(5-phosphoribosyl)-5-[(5-phosphoribosylamino)methylideneamino]imidazole-4-carboxamide isomerase"/>
    <property type="match status" value="1"/>
</dbReference>
<dbReference type="NCBIfam" id="NF010112">
    <property type="entry name" value="PRK13585.1"/>
    <property type="match status" value="1"/>
</dbReference>
<dbReference type="PANTHER" id="PTHR43090">
    <property type="entry name" value="1-(5-PHOSPHORIBOSYL)-5-[(5-PHOSPHORIBOSYLAMINO)METHYLIDENEAMINO] IMIDAZOLE-4-CARBOXAMIDE ISOMERASE"/>
    <property type="match status" value="1"/>
</dbReference>
<dbReference type="PANTHER" id="PTHR43090:SF2">
    <property type="entry name" value="1-(5-PHOSPHORIBOSYL)-5-[(5-PHOSPHORIBOSYLAMINO)METHYLIDENEAMINO] IMIDAZOLE-4-CARBOXAMIDE ISOMERASE"/>
    <property type="match status" value="1"/>
</dbReference>
<dbReference type="Pfam" id="PF00977">
    <property type="entry name" value="His_biosynth"/>
    <property type="match status" value="1"/>
</dbReference>
<dbReference type="SUPFAM" id="SSF51366">
    <property type="entry name" value="Ribulose-phoshate binding barrel"/>
    <property type="match status" value="1"/>
</dbReference>
<evidence type="ECO:0000255" key="1">
    <source>
        <dbReference type="HAMAP-Rule" id="MF_01014"/>
    </source>
</evidence>
<accession>A3NE94</accession>
<sequence>MLLIPAIDLKDGQCVRLKQGDMDQATIFSEDPAAMARKWVDLGARRLHLVDLNGAFAGKPKNLEAIEAILGEVGDEIPVQLGGGIRSLETIEKYLDAGLSYVIIGTAAVKDPGFLQDACSAFAGNIIVGLDAKDGKVATDGWSKLTGHEVIDLARKFEDYGVESIVYTDIGRDGMLQGINIEATVKLAQAVGIPVIASGGLSNIVDIEKLCEVEDEGIEGVICGRAIYSGDLDFAAAQKRADELNGELDDA</sequence>
<proteinExistence type="inferred from homology"/>
<gene>
    <name evidence="1" type="primary">hisA</name>
    <name type="ordered locus">BURPS668_3661</name>
</gene>
<keyword id="KW-0028">Amino-acid biosynthesis</keyword>
<keyword id="KW-0963">Cytoplasm</keyword>
<keyword id="KW-0368">Histidine biosynthesis</keyword>
<keyword id="KW-0413">Isomerase</keyword>
<name>HIS4_BURP6</name>
<reference key="1">
    <citation type="journal article" date="2010" name="Genome Biol. Evol.">
        <title>Continuing evolution of Burkholderia mallei through genome reduction and large-scale rearrangements.</title>
        <authorList>
            <person name="Losada L."/>
            <person name="Ronning C.M."/>
            <person name="DeShazer D."/>
            <person name="Woods D."/>
            <person name="Fedorova N."/>
            <person name="Kim H.S."/>
            <person name="Shabalina S.A."/>
            <person name="Pearson T.R."/>
            <person name="Brinkac L."/>
            <person name="Tan P."/>
            <person name="Nandi T."/>
            <person name="Crabtree J."/>
            <person name="Badger J."/>
            <person name="Beckstrom-Sternberg S."/>
            <person name="Saqib M."/>
            <person name="Schutzer S.E."/>
            <person name="Keim P."/>
            <person name="Nierman W.C."/>
        </authorList>
    </citation>
    <scope>NUCLEOTIDE SEQUENCE [LARGE SCALE GENOMIC DNA]</scope>
    <source>
        <strain>668</strain>
    </source>
</reference>
<organism>
    <name type="scientific">Burkholderia pseudomallei (strain 668)</name>
    <dbReference type="NCBI Taxonomy" id="320373"/>
    <lineage>
        <taxon>Bacteria</taxon>
        <taxon>Pseudomonadati</taxon>
        <taxon>Pseudomonadota</taxon>
        <taxon>Betaproteobacteria</taxon>
        <taxon>Burkholderiales</taxon>
        <taxon>Burkholderiaceae</taxon>
        <taxon>Burkholderia</taxon>
        <taxon>pseudomallei group</taxon>
    </lineage>
</organism>
<comment type="catalytic activity">
    <reaction evidence="1">
        <text>1-(5-phospho-beta-D-ribosyl)-5-[(5-phospho-beta-D-ribosylamino)methylideneamino]imidazole-4-carboxamide = 5-[(5-phospho-1-deoxy-D-ribulos-1-ylimino)methylamino]-1-(5-phospho-beta-D-ribosyl)imidazole-4-carboxamide</text>
        <dbReference type="Rhea" id="RHEA:15469"/>
        <dbReference type="ChEBI" id="CHEBI:58435"/>
        <dbReference type="ChEBI" id="CHEBI:58525"/>
        <dbReference type="EC" id="5.3.1.16"/>
    </reaction>
</comment>
<comment type="pathway">
    <text evidence="1">Amino-acid biosynthesis; L-histidine biosynthesis; L-histidine from 5-phospho-alpha-D-ribose 1-diphosphate: step 4/9.</text>
</comment>
<comment type="subcellular location">
    <subcellularLocation>
        <location evidence="1">Cytoplasm</location>
    </subcellularLocation>
</comment>
<comment type="similarity">
    <text evidence="1">Belongs to the HisA/HisF family.</text>
</comment>
<feature type="chain" id="PRO_1000063194" description="1-(5-phosphoribosyl)-5-[(5-phosphoribosylamino)methylideneamino] imidazole-4-carboxamide isomerase">
    <location>
        <begin position="1"/>
        <end position="251"/>
    </location>
</feature>
<feature type="active site" description="Proton acceptor" evidence="1">
    <location>
        <position position="8"/>
    </location>
</feature>
<feature type="active site" description="Proton donor" evidence="1">
    <location>
        <position position="131"/>
    </location>
</feature>
<protein>
    <recommendedName>
        <fullName evidence="1">1-(5-phosphoribosyl)-5-[(5-phosphoribosylamino)methylideneamino] imidazole-4-carboxamide isomerase</fullName>
        <ecNumber evidence="1">5.3.1.16</ecNumber>
    </recommendedName>
    <alternativeName>
        <fullName evidence="1">Phosphoribosylformimino-5-aminoimidazole carboxamide ribotide isomerase</fullName>
    </alternativeName>
</protein>